<dbReference type="EMBL" id="AE014295">
    <property type="protein sequence ID" value="AAN24835.1"/>
    <property type="molecule type" value="Genomic_DNA"/>
</dbReference>
<dbReference type="RefSeq" id="NP_696199.1">
    <property type="nucleotide sequence ID" value="NC_004307.2"/>
</dbReference>
<dbReference type="RefSeq" id="WP_011068258.1">
    <property type="nucleotide sequence ID" value="NC_004307.2"/>
</dbReference>
<dbReference type="SMR" id="Q8G5I3"/>
<dbReference type="STRING" id="206672.BL1029"/>
<dbReference type="EnsemblBacteria" id="AAN24835">
    <property type="protein sequence ID" value="AAN24835"/>
    <property type="gene ID" value="BL1029"/>
</dbReference>
<dbReference type="KEGG" id="blo:BL1029"/>
<dbReference type="PATRIC" id="fig|206672.9.peg.734"/>
<dbReference type="HOGENOM" id="CLU_007733_1_0_11"/>
<dbReference type="OrthoDB" id="9763654at2"/>
<dbReference type="PhylomeDB" id="Q8G5I3"/>
<dbReference type="Proteomes" id="UP000000439">
    <property type="component" value="Chromosome"/>
</dbReference>
<dbReference type="GO" id="GO:0005576">
    <property type="term" value="C:extracellular region"/>
    <property type="evidence" value="ECO:0007669"/>
    <property type="project" value="TreeGrafter"/>
</dbReference>
<dbReference type="GO" id="GO:0005886">
    <property type="term" value="C:plasma membrane"/>
    <property type="evidence" value="ECO:0007669"/>
    <property type="project" value="UniProtKB-SubCell"/>
</dbReference>
<dbReference type="HAMAP" id="MF_01600">
    <property type="entry name" value="UPF0182"/>
    <property type="match status" value="1"/>
</dbReference>
<dbReference type="InterPro" id="IPR005372">
    <property type="entry name" value="UPF0182"/>
</dbReference>
<dbReference type="PANTHER" id="PTHR39344">
    <property type="entry name" value="UPF0182 PROTEIN SLL1060"/>
    <property type="match status" value="1"/>
</dbReference>
<dbReference type="PANTHER" id="PTHR39344:SF1">
    <property type="entry name" value="UPF0182 PROTEIN SLL1060"/>
    <property type="match status" value="1"/>
</dbReference>
<dbReference type="Pfam" id="PF03699">
    <property type="entry name" value="UPF0182"/>
    <property type="match status" value="1"/>
</dbReference>
<sequence length="1066" mass="115055">MSFNDPFSILFGNGGDSRRNNANNDDPIILDVEADGDGPARNTNAGPSGSSRPPRGPANPRITRKPASGGSGGSRGSKILIGVVLALAIIVGLFFGLSRFITDLMWYGQLGFQSVVWTQLGVKIGLWVAYALLMALTGFVSAWLAIRARPDSADGSTIRINGDVVEVGKSVSSKTARRVAVVISLIVGVIFGSQFNANWSEILLMFNAQSFGTTDPQFGLDNGFYVFVLPGLKLVLAAVAMLLGVGLVFSVVTHVLMGGIRITMPVNGRGLFSITKRCRRQLGIWLMLNMFAWAVRQMIGVFDQLTVQGSRITGASYTAVHANIPVTFIMAALTAILGVVLGIWLMRSHTLEGQASIGVRASAALKAWRVPVTSIAVVVVVGLVLTVAWPVLLQRFRVNPNAQEMESTYIQRNIDATRAAYGLDKLKTEQYKVTDKGEQGALAKEGDTTAQIRLLDPQVVSPTFKQLQQSKQYYTFADTLAVDKYEIDGVSQDTVIAARELDLAGNDNRNWVNDHTVYTHGYGVVAAYGNKVTADGQPEFFESGIPTQGKLTESEKYEPRIYFSPNTTEYSIVGAPEGTQAWEFDYPTGSEGALTTFKGDGGPSVGNLFSRILYAIRFGSDQILFSDRVTSESQILYDRSPKERVAKVAPYLTLDGRVYPAVVDGRVKWIVDGYTTSDAYPYSQMTDLGSATKDSTTVSSATVSSLGSQKANYIRNSVKATVDAYDGSVDLYVWDQSDPVIKAWEKIFPGQYHQLSDISGDLMSHMRYPESLFKVQRELLSKYHVTSANQYYSGEDFWQTPVDPTESQSQQDQDILQPPYYLTLQTGGTKEPVFSLSSTYIPAGQSTREILTGFLSVDSDAGNEKGKIGSNYGTIRLQELPKDSNVPGPGQAQNNFNANADVSKELNLLQSGDTQVVRGNLLTLPLGGGLVYVQPVYVKSSGATSFPLLKKTLVAFGDQVGFADTLDEALDQVFGGDSGAAAGDAENVSGDQSGSDTNGGQSGTTDGKSDSGSSSDRSPELQQALNDAAQAMKDSQSAMKNGDWTAYGKAQQELEDALNKAIELDK</sequence>
<keyword id="KW-1003">Cell membrane</keyword>
<keyword id="KW-0472">Membrane</keyword>
<keyword id="KW-1185">Reference proteome</keyword>
<keyword id="KW-0812">Transmembrane</keyword>
<keyword id="KW-1133">Transmembrane helix</keyword>
<proteinExistence type="inferred from homology"/>
<gene>
    <name type="ordered locus">BL1029</name>
</gene>
<reference key="1">
    <citation type="journal article" date="2002" name="Proc. Natl. Acad. Sci. U.S.A.">
        <title>The genome sequence of Bifidobacterium longum reflects its adaptation to the human gastrointestinal tract.</title>
        <authorList>
            <person name="Schell M.A."/>
            <person name="Karmirantzou M."/>
            <person name="Snel B."/>
            <person name="Vilanova D."/>
            <person name="Berger B."/>
            <person name="Pessi G."/>
            <person name="Zwahlen M.-C."/>
            <person name="Desiere F."/>
            <person name="Bork P."/>
            <person name="Delley M."/>
            <person name="Pridmore R.D."/>
            <person name="Arigoni F."/>
        </authorList>
    </citation>
    <scope>NUCLEOTIDE SEQUENCE [LARGE SCALE GENOMIC DNA]</scope>
    <source>
        <strain>NCC 2705</strain>
    </source>
</reference>
<organism>
    <name type="scientific">Bifidobacterium longum (strain NCC 2705)</name>
    <dbReference type="NCBI Taxonomy" id="206672"/>
    <lineage>
        <taxon>Bacteria</taxon>
        <taxon>Bacillati</taxon>
        <taxon>Actinomycetota</taxon>
        <taxon>Actinomycetes</taxon>
        <taxon>Bifidobacteriales</taxon>
        <taxon>Bifidobacteriaceae</taxon>
        <taxon>Bifidobacterium</taxon>
    </lineage>
</organism>
<accession>Q8G5I3</accession>
<protein>
    <recommendedName>
        <fullName evidence="1">UPF0182 protein BL1029</fullName>
    </recommendedName>
</protein>
<comment type="subcellular location">
    <subcellularLocation>
        <location evidence="1">Cell membrane</location>
        <topology evidence="1">Multi-pass membrane protein</topology>
    </subcellularLocation>
</comment>
<comment type="similarity">
    <text evidence="1">Belongs to the UPF0182 family.</text>
</comment>
<evidence type="ECO:0000255" key="1">
    <source>
        <dbReference type="HAMAP-Rule" id="MF_01600"/>
    </source>
</evidence>
<evidence type="ECO:0000256" key="2">
    <source>
        <dbReference type="SAM" id="MobiDB-lite"/>
    </source>
</evidence>
<feature type="chain" id="PRO_0000291273" description="UPF0182 protein BL1029">
    <location>
        <begin position="1"/>
        <end position="1066"/>
    </location>
</feature>
<feature type="transmembrane region" description="Helical" evidence="1">
    <location>
        <begin position="77"/>
        <end position="97"/>
    </location>
</feature>
<feature type="transmembrane region" description="Helical" evidence="1">
    <location>
        <begin position="126"/>
        <end position="146"/>
    </location>
</feature>
<feature type="transmembrane region" description="Helical" evidence="1">
    <location>
        <begin position="179"/>
        <end position="199"/>
    </location>
</feature>
<feature type="transmembrane region" description="Helical" evidence="1">
    <location>
        <begin position="235"/>
        <end position="255"/>
    </location>
</feature>
<feature type="transmembrane region" description="Helical" evidence="1">
    <location>
        <begin position="282"/>
        <end position="302"/>
    </location>
</feature>
<feature type="transmembrane region" description="Helical" evidence="1">
    <location>
        <begin position="326"/>
        <end position="346"/>
    </location>
</feature>
<feature type="transmembrane region" description="Helical" evidence="1">
    <location>
        <begin position="372"/>
        <end position="392"/>
    </location>
</feature>
<feature type="region of interest" description="Disordered" evidence="2">
    <location>
        <begin position="12"/>
        <end position="74"/>
    </location>
</feature>
<feature type="region of interest" description="Disordered" evidence="2">
    <location>
        <begin position="977"/>
        <end position="1044"/>
    </location>
</feature>
<feature type="compositionally biased region" description="Low complexity" evidence="2">
    <location>
        <begin position="44"/>
        <end position="61"/>
    </location>
</feature>
<feature type="compositionally biased region" description="Polar residues" evidence="2">
    <location>
        <begin position="989"/>
        <end position="998"/>
    </location>
</feature>
<feature type="compositionally biased region" description="Low complexity" evidence="2">
    <location>
        <begin position="1003"/>
        <end position="1016"/>
    </location>
</feature>
<name>Y1029_BIFLO</name>